<sequence>MTTILKHLPINQRVGIAFSGGLDTSAALLWMQKKGAIPYAYTANLGQPDEEDYEAIPRKAMEYGAEKARLIDCRKQLVAEGIAAIQCGAFHNTTAGVTYFNTTPLGRAVTGTMLVAAMKEDDVNIWGDGSTYKGNDIERFYRYGLLTNAELKIYKPWLDTDFIDELGGRHEMSEFMIQSGFDYKMSTEKAYSTDSNMLGATHEAKDLEFLNSSVKIVNPIMGVKFWDENVVVKAEEVTVRFERGYPVALNGVVFDDSVELMMEANRIGGRHGLGMSDQIENRIIEAKSRGIYEAPGMALLHIAYERLLTGIHNEDTIEQYHANGRVLGRLLYQGRWFDPQALMLRDSIQRWVASEITGEVTLELRRGNDYSILNTVSDNLTYKPERLTMEKGDSVFSPDDRIGQLTMRNLDITDTREKLFNYVETGLLTSSAATGLPQVDNNNLSSGRGLQDKRQ</sequence>
<protein>
    <recommendedName>
        <fullName evidence="1">Argininosuccinate synthase</fullName>
        <ecNumber evidence="1">6.3.4.5</ecNumber>
    </recommendedName>
    <alternativeName>
        <fullName evidence="1">Citrulline--aspartate ligase</fullName>
    </alternativeName>
</protein>
<reference key="1">
    <citation type="submission" date="2008-04" db="EMBL/GenBank/DDBJ databases">
        <title>Complete sequence of Yersinia pseudotuberculosis PB1/+.</title>
        <authorList>
            <person name="Copeland A."/>
            <person name="Lucas S."/>
            <person name="Lapidus A."/>
            <person name="Glavina del Rio T."/>
            <person name="Dalin E."/>
            <person name="Tice H."/>
            <person name="Bruce D."/>
            <person name="Goodwin L."/>
            <person name="Pitluck S."/>
            <person name="Munk A.C."/>
            <person name="Brettin T."/>
            <person name="Detter J.C."/>
            <person name="Han C."/>
            <person name="Tapia R."/>
            <person name="Schmutz J."/>
            <person name="Larimer F."/>
            <person name="Land M."/>
            <person name="Hauser L."/>
            <person name="Challacombe J.F."/>
            <person name="Green L."/>
            <person name="Lindler L.E."/>
            <person name="Nikolich M.P."/>
            <person name="Richardson P."/>
        </authorList>
    </citation>
    <scope>NUCLEOTIDE SEQUENCE [LARGE SCALE GENOMIC DNA]</scope>
    <source>
        <strain>PB1/+</strain>
    </source>
</reference>
<name>ASSY_YERPB</name>
<organism>
    <name type="scientific">Yersinia pseudotuberculosis serotype IB (strain PB1/+)</name>
    <dbReference type="NCBI Taxonomy" id="502801"/>
    <lineage>
        <taxon>Bacteria</taxon>
        <taxon>Pseudomonadati</taxon>
        <taxon>Pseudomonadota</taxon>
        <taxon>Gammaproteobacteria</taxon>
        <taxon>Enterobacterales</taxon>
        <taxon>Yersiniaceae</taxon>
        <taxon>Yersinia</taxon>
    </lineage>
</organism>
<comment type="catalytic activity">
    <reaction evidence="1">
        <text>L-citrulline + L-aspartate + ATP = 2-(N(omega)-L-arginino)succinate + AMP + diphosphate + H(+)</text>
        <dbReference type="Rhea" id="RHEA:10932"/>
        <dbReference type="ChEBI" id="CHEBI:15378"/>
        <dbReference type="ChEBI" id="CHEBI:29991"/>
        <dbReference type="ChEBI" id="CHEBI:30616"/>
        <dbReference type="ChEBI" id="CHEBI:33019"/>
        <dbReference type="ChEBI" id="CHEBI:57472"/>
        <dbReference type="ChEBI" id="CHEBI:57743"/>
        <dbReference type="ChEBI" id="CHEBI:456215"/>
        <dbReference type="EC" id="6.3.4.5"/>
    </reaction>
</comment>
<comment type="pathway">
    <text evidence="1">Amino-acid biosynthesis; L-arginine biosynthesis; L-arginine from L-ornithine and carbamoyl phosphate: step 2/3.</text>
</comment>
<comment type="subunit">
    <text evidence="1">Homotetramer.</text>
</comment>
<comment type="subcellular location">
    <subcellularLocation>
        <location evidence="1">Cytoplasm</location>
    </subcellularLocation>
</comment>
<comment type="similarity">
    <text evidence="1">Belongs to the argininosuccinate synthase family. Type 2 subfamily.</text>
</comment>
<keyword id="KW-0028">Amino-acid biosynthesis</keyword>
<keyword id="KW-0055">Arginine biosynthesis</keyword>
<keyword id="KW-0067">ATP-binding</keyword>
<keyword id="KW-0963">Cytoplasm</keyword>
<keyword id="KW-0436">Ligase</keyword>
<keyword id="KW-0547">Nucleotide-binding</keyword>
<gene>
    <name evidence="1" type="primary">argG</name>
    <name type="ordered locus">YPTS_1693</name>
</gene>
<feature type="chain" id="PRO_1000129771" description="Argininosuccinate synthase">
    <location>
        <begin position="1"/>
        <end position="455"/>
    </location>
</feature>
<feature type="region of interest" description="Disordered" evidence="2">
    <location>
        <begin position="434"/>
        <end position="455"/>
    </location>
</feature>
<feature type="compositionally biased region" description="Polar residues" evidence="2">
    <location>
        <begin position="434"/>
        <end position="448"/>
    </location>
</feature>
<feature type="binding site" evidence="1">
    <location>
        <begin position="17"/>
        <end position="25"/>
    </location>
    <ligand>
        <name>ATP</name>
        <dbReference type="ChEBI" id="CHEBI:30616"/>
    </ligand>
</feature>
<feature type="binding site" evidence="1">
    <location>
        <position position="43"/>
    </location>
    <ligand>
        <name>ATP</name>
        <dbReference type="ChEBI" id="CHEBI:30616"/>
    </ligand>
</feature>
<feature type="binding site" evidence="1">
    <location>
        <position position="99"/>
    </location>
    <ligand>
        <name>L-citrulline</name>
        <dbReference type="ChEBI" id="CHEBI:57743"/>
    </ligand>
</feature>
<feature type="binding site" evidence="1">
    <location>
        <position position="129"/>
    </location>
    <ligand>
        <name>ATP</name>
        <dbReference type="ChEBI" id="CHEBI:30616"/>
    </ligand>
</feature>
<feature type="binding site" evidence="1">
    <location>
        <position position="131"/>
    </location>
    <ligand>
        <name>ATP</name>
        <dbReference type="ChEBI" id="CHEBI:30616"/>
    </ligand>
</feature>
<feature type="binding site" evidence="1">
    <location>
        <position position="131"/>
    </location>
    <ligand>
        <name>L-aspartate</name>
        <dbReference type="ChEBI" id="CHEBI:29991"/>
    </ligand>
</feature>
<feature type="binding site" evidence="1">
    <location>
        <position position="135"/>
    </location>
    <ligand>
        <name>L-aspartate</name>
        <dbReference type="ChEBI" id="CHEBI:29991"/>
    </ligand>
</feature>
<feature type="binding site" evidence="1">
    <location>
        <position position="135"/>
    </location>
    <ligand>
        <name>L-citrulline</name>
        <dbReference type="ChEBI" id="CHEBI:57743"/>
    </ligand>
</feature>
<feature type="binding site" evidence="1">
    <location>
        <position position="136"/>
    </location>
    <ligand>
        <name>ATP</name>
        <dbReference type="ChEBI" id="CHEBI:30616"/>
    </ligand>
</feature>
<feature type="binding site" evidence="1">
    <location>
        <position position="136"/>
    </location>
    <ligand>
        <name>L-aspartate</name>
        <dbReference type="ChEBI" id="CHEBI:29991"/>
    </ligand>
</feature>
<feature type="binding site" evidence="1">
    <location>
        <position position="139"/>
    </location>
    <ligand>
        <name>L-citrulline</name>
        <dbReference type="ChEBI" id="CHEBI:57743"/>
    </ligand>
</feature>
<feature type="binding site" evidence="1">
    <location>
        <position position="192"/>
    </location>
    <ligand>
        <name>L-citrulline</name>
        <dbReference type="ChEBI" id="CHEBI:57743"/>
    </ligand>
</feature>
<feature type="binding site" evidence="1">
    <location>
        <position position="194"/>
    </location>
    <ligand>
        <name>ATP</name>
        <dbReference type="ChEBI" id="CHEBI:30616"/>
    </ligand>
</feature>
<feature type="binding site" evidence="1">
    <location>
        <position position="201"/>
    </location>
    <ligand>
        <name>L-citrulline</name>
        <dbReference type="ChEBI" id="CHEBI:57743"/>
    </ligand>
</feature>
<feature type="binding site" evidence="1">
    <location>
        <position position="203"/>
    </location>
    <ligand>
        <name>L-citrulline</name>
        <dbReference type="ChEBI" id="CHEBI:57743"/>
    </ligand>
</feature>
<feature type="binding site" evidence="1">
    <location>
        <position position="280"/>
    </location>
    <ligand>
        <name>L-citrulline</name>
        <dbReference type="ChEBI" id="CHEBI:57743"/>
    </ligand>
</feature>
<accession>B2JZQ2</accession>
<dbReference type="EC" id="6.3.4.5" evidence="1"/>
<dbReference type="EMBL" id="CP001048">
    <property type="protein sequence ID" value="ACC88662.1"/>
    <property type="molecule type" value="Genomic_DNA"/>
</dbReference>
<dbReference type="RefSeq" id="WP_002211920.1">
    <property type="nucleotide sequence ID" value="NZ_CP009780.1"/>
</dbReference>
<dbReference type="SMR" id="B2JZQ2"/>
<dbReference type="GeneID" id="96665184"/>
<dbReference type="KEGG" id="ypb:YPTS_1693"/>
<dbReference type="PATRIC" id="fig|502801.10.peg.1068"/>
<dbReference type="UniPathway" id="UPA00068">
    <property type="reaction ID" value="UER00113"/>
</dbReference>
<dbReference type="GO" id="GO:0005737">
    <property type="term" value="C:cytoplasm"/>
    <property type="evidence" value="ECO:0007669"/>
    <property type="project" value="UniProtKB-SubCell"/>
</dbReference>
<dbReference type="GO" id="GO:0004055">
    <property type="term" value="F:argininosuccinate synthase activity"/>
    <property type="evidence" value="ECO:0007669"/>
    <property type="project" value="UniProtKB-UniRule"/>
</dbReference>
<dbReference type="GO" id="GO:0005524">
    <property type="term" value="F:ATP binding"/>
    <property type="evidence" value="ECO:0007669"/>
    <property type="project" value="UniProtKB-UniRule"/>
</dbReference>
<dbReference type="GO" id="GO:0042803">
    <property type="term" value="F:protein homodimerization activity"/>
    <property type="evidence" value="ECO:0007669"/>
    <property type="project" value="InterPro"/>
</dbReference>
<dbReference type="GO" id="GO:0000053">
    <property type="term" value="P:argininosuccinate metabolic process"/>
    <property type="evidence" value="ECO:0007669"/>
    <property type="project" value="TreeGrafter"/>
</dbReference>
<dbReference type="GO" id="GO:0006526">
    <property type="term" value="P:L-arginine biosynthetic process"/>
    <property type="evidence" value="ECO:0007669"/>
    <property type="project" value="UniProtKB-UniRule"/>
</dbReference>
<dbReference type="GO" id="GO:0000050">
    <property type="term" value="P:urea cycle"/>
    <property type="evidence" value="ECO:0007669"/>
    <property type="project" value="TreeGrafter"/>
</dbReference>
<dbReference type="CDD" id="cd01999">
    <property type="entry name" value="ASS"/>
    <property type="match status" value="1"/>
</dbReference>
<dbReference type="FunFam" id="1.10.287.400:FF:000001">
    <property type="entry name" value="Argininosuccinate synthase"/>
    <property type="match status" value="1"/>
</dbReference>
<dbReference type="Gene3D" id="1.10.287.400">
    <property type="match status" value="1"/>
</dbReference>
<dbReference type="Gene3D" id="3.90.1260.10">
    <property type="entry name" value="Argininosuccinate synthetase, chain A, domain 2"/>
    <property type="match status" value="1"/>
</dbReference>
<dbReference type="Gene3D" id="3.40.50.620">
    <property type="entry name" value="HUPs"/>
    <property type="match status" value="1"/>
</dbReference>
<dbReference type="HAMAP" id="MF_00581">
    <property type="entry name" value="Arg_succ_synth_type2"/>
    <property type="match status" value="1"/>
</dbReference>
<dbReference type="InterPro" id="IPR023437">
    <property type="entry name" value="Arg_succ_synth_type2_subfam"/>
</dbReference>
<dbReference type="InterPro" id="IPR048268">
    <property type="entry name" value="Arginosuc_syn_C"/>
</dbReference>
<dbReference type="InterPro" id="IPR048267">
    <property type="entry name" value="Arginosuc_syn_N"/>
</dbReference>
<dbReference type="InterPro" id="IPR001518">
    <property type="entry name" value="Arginosuc_synth"/>
</dbReference>
<dbReference type="InterPro" id="IPR018223">
    <property type="entry name" value="Arginosuc_synth_CS"/>
</dbReference>
<dbReference type="InterPro" id="IPR023434">
    <property type="entry name" value="Arginosuc_synth_type_1_subfam"/>
</dbReference>
<dbReference type="InterPro" id="IPR024074">
    <property type="entry name" value="AS_cat/multimer_dom_body"/>
</dbReference>
<dbReference type="InterPro" id="IPR024073">
    <property type="entry name" value="AS_multimer_C_tail"/>
</dbReference>
<dbReference type="InterPro" id="IPR014729">
    <property type="entry name" value="Rossmann-like_a/b/a_fold"/>
</dbReference>
<dbReference type="NCBIfam" id="TIGR00032">
    <property type="entry name" value="argG"/>
    <property type="match status" value="1"/>
</dbReference>
<dbReference type="NCBIfam" id="NF003779">
    <property type="entry name" value="PRK05370.1"/>
    <property type="match status" value="1"/>
</dbReference>
<dbReference type="PANTHER" id="PTHR11587">
    <property type="entry name" value="ARGININOSUCCINATE SYNTHASE"/>
    <property type="match status" value="1"/>
</dbReference>
<dbReference type="PANTHER" id="PTHR11587:SF2">
    <property type="entry name" value="ARGININOSUCCINATE SYNTHASE"/>
    <property type="match status" value="1"/>
</dbReference>
<dbReference type="Pfam" id="PF20979">
    <property type="entry name" value="Arginosuc_syn_C"/>
    <property type="match status" value="1"/>
</dbReference>
<dbReference type="Pfam" id="PF00764">
    <property type="entry name" value="Arginosuc_synth"/>
    <property type="match status" value="1"/>
</dbReference>
<dbReference type="SUPFAM" id="SSF52402">
    <property type="entry name" value="Adenine nucleotide alpha hydrolases-like"/>
    <property type="match status" value="1"/>
</dbReference>
<dbReference type="SUPFAM" id="SSF69864">
    <property type="entry name" value="Argininosuccinate synthetase, C-terminal domain"/>
    <property type="match status" value="1"/>
</dbReference>
<dbReference type="PROSITE" id="PS00564">
    <property type="entry name" value="ARGININOSUCCIN_SYN_1"/>
    <property type="match status" value="1"/>
</dbReference>
<dbReference type="PROSITE" id="PS00565">
    <property type="entry name" value="ARGININOSUCCIN_SYN_2"/>
    <property type="match status" value="1"/>
</dbReference>
<evidence type="ECO:0000255" key="1">
    <source>
        <dbReference type="HAMAP-Rule" id="MF_00581"/>
    </source>
</evidence>
<evidence type="ECO:0000256" key="2">
    <source>
        <dbReference type="SAM" id="MobiDB-lite"/>
    </source>
</evidence>
<proteinExistence type="inferred from homology"/>